<organism>
    <name type="scientific">Drosophila simulans</name>
    <name type="common">Fruit fly</name>
    <dbReference type="NCBI Taxonomy" id="7240"/>
    <lineage>
        <taxon>Eukaryota</taxon>
        <taxon>Metazoa</taxon>
        <taxon>Ecdysozoa</taxon>
        <taxon>Arthropoda</taxon>
        <taxon>Hexapoda</taxon>
        <taxon>Insecta</taxon>
        <taxon>Pterygota</taxon>
        <taxon>Neoptera</taxon>
        <taxon>Endopterygota</taxon>
        <taxon>Diptera</taxon>
        <taxon>Brachycera</taxon>
        <taxon>Muscomorpha</taxon>
        <taxon>Ephydroidea</taxon>
        <taxon>Drosophilidae</taxon>
        <taxon>Drosophila</taxon>
        <taxon>Sophophora</taxon>
    </lineage>
</organism>
<keyword id="KW-0963">Cytoplasm</keyword>
<keyword id="KW-0396">Initiation factor</keyword>
<keyword id="KW-0648">Protein biosynthesis</keyword>
<keyword id="KW-1185">Reference proteome</keyword>
<keyword id="KW-0694">RNA-binding</keyword>
<name>EI3G2_DROSI</name>
<protein>
    <recommendedName>
        <fullName evidence="1">Eukaryotic translation initiation factor 3 subunit G-2</fullName>
    </recommendedName>
    <alternativeName>
        <fullName evidence="2">Eukaryotic translation initiation factor 3 RNA-binding subunit 2</fullName>
        <shortName evidence="2">eIF-3 RNA-binding subunit 2</shortName>
    </alternativeName>
    <alternativeName>
        <fullName evidence="2">Eukaryotic translation initiation factor 3 subunit 4-2</fullName>
    </alternativeName>
</protein>
<dbReference type="EMBL" id="CM000364">
    <property type="protein sequence ID" value="EDX12233.1"/>
    <property type="molecule type" value="Genomic_DNA"/>
</dbReference>
<dbReference type="SMR" id="B4QS37"/>
<dbReference type="STRING" id="7240.B4QS37"/>
<dbReference type="EnsemblMetazoa" id="FBtr0219262">
    <property type="protein sequence ID" value="FBpp0217754"/>
    <property type="gene ID" value="FBgn0190854"/>
</dbReference>
<dbReference type="EnsemblMetazoa" id="XM_002102694.4">
    <property type="protein sequence ID" value="XP_002102730.1"/>
    <property type="gene ID" value="LOC6727345"/>
</dbReference>
<dbReference type="GeneID" id="6727345"/>
<dbReference type="KEGG" id="dsi:Dsimw501_GD19352"/>
<dbReference type="CTD" id="42422"/>
<dbReference type="HOGENOM" id="CLU_034595_0_0_1"/>
<dbReference type="OMA" id="IVNPYPN"/>
<dbReference type="OrthoDB" id="639027at2759"/>
<dbReference type="PhylomeDB" id="B4QS37"/>
<dbReference type="Proteomes" id="UP000000304">
    <property type="component" value="Chromosome 3R"/>
</dbReference>
<dbReference type="Bgee" id="FBgn0190854">
    <property type="expression patterns" value="Expressed in male reproductive system and 2 other cell types or tissues"/>
</dbReference>
<dbReference type="GO" id="GO:0016282">
    <property type="term" value="C:eukaryotic 43S preinitiation complex"/>
    <property type="evidence" value="ECO:0007669"/>
    <property type="project" value="UniProtKB-UniRule"/>
</dbReference>
<dbReference type="GO" id="GO:0033290">
    <property type="term" value="C:eukaryotic 48S preinitiation complex"/>
    <property type="evidence" value="ECO:0007669"/>
    <property type="project" value="UniProtKB-UniRule"/>
</dbReference>
<dbReference type="GO" id="GO:0005852">
    <property type="term" value="C:eukaryotic translation initiation factor 3 complex"/>
    <property type="evidence" value="ECO:0007669"/>
    <property type="project" value="UniProtKB-UniRule"/>
</dbReference>
<dbReference type="GO" id="GO:0003723">
    <property type="term" value="F:RNA binding"/>
    <property type="evidence" value="ECO:0007669"/>
    <property type="project" value="UniProtKB-UniRule"/>
</dbReference>
<dbReference type="GO" id="GO:0003743">
    <property type="term" value="F:translation initiation factor activity"/>
    <property type="evidence" value="ECO:0007669"/>
    <property type="project" value="UniProtKB-UniRule"/>
</dbReference>
<dbReference type="GO" id="GO:0001732">
    <property type="term" value="P:formation of cytoplasmic translation initiation complex"/>
    <property type="evidence" value="ECO:0007669"/>
    <property type="project" value="UniProtKB-UniRule"/>
</dbReference>
<dbReference type="CDD" id="cd12933">
    <property type="entry name" value="eIF3G"/>
    <property type="match status" value="1"/>
</dbReference>
<dbReference type="CDD" id="cd12408">
    <property type="entry name" value="RRM_eIF3G_like"/>
    <property type="match status" value="1"/>
</dbReference>
<dbReference type="FunFam" id="3.30.70.330:FF:001070">
    <property type="entry name" value="Eukaryotic translation initiation factor 3 subunit G"/>
    <property type="match status" value="1"/>
</dbReference>
<dbReference type="Gene3D" id="3.30.70.330">
    <property type="match status" value="1"/>
</dbReference>
<dbReference type="HAMAP" id="MF_03006">
    <property type="entry name" value="eIF3g"/>
    <property type="match status" value="1"/>
</dbReference>
<dbReference type="InterPro" id="IPR017334">
    <property type="entry name" value="eIF3_g"/>
</dbReference>
<dbReference type="InterPro" id="IPR024675">
    <property type="entry name" value="eIF3g_N"/>
</dbReference>
<dbReference type="InterPro" id="IPR034240">
    <property type="entry name" value="eIF3G_RRM"/>
</dbReference>
<dbReference type="InterPro" id="IPR012677">
    <property type="entry name" value="Nucleotide-bd_a/b_plait_sf"/>
</dbReference>
<dbReference type="InterPro" id="IPR035979">
    <property type="entry name" value="RBD_domain_sf"/>
</dbReference>
<dbReference type="InterPro" id="IPR000504">
    <property type="entry name" value="RRM_dom"/>
</dbReference>
<dbReference type="PANTHER" id="PTHR10352">
    <property type="entry name" value="EUKARYOTIC TRANSLATION INITIATION FACTOR 3 SUBUNIT G"/>
    <property type="match status" value="1"/>
</dbReference>
<dbReference type="Pfam" id="PF12353">
    <property type="entry name" value="eIF3g"/>
    <property type="match status" value="1"/>
</dbReference>
<dbReference type="Pfam" id="PF00076">
    <property type="entry name" value="RRM_1"/>
    <property type="match status" value="1"/>
</dbReference>
<dbReference type="PIRSF" id="PIRSF037949">
    <property type="entry name" value="Transl_init_eIF-3_RNA-bind"/>
    <property type="match status" value="1"/>
</dbReference>
<dbReference type="SMART" id="SM00360">
    <property type="entry name" value="RRM"/>
    <property type="match status" value="1"/>
</dbReference>
<dbReference type="SUPFAM" id="SSF54928">
    <property type="entry name" value="RNA-binding domain, RBD"/>
    <property type="match status" value="1"/>
</dbReference>
<dbReference type="PROSITE" id="PS50102">
    <property type="entry name" value="RRM"/>
    <property type="match status" value="1"/>
</dbReference>
<sequence length="273" mass="30555">MKSFITSWADEVDADYVDGLPPSNEYIKGDYKYVTEYKFNDDGKKVKVVRTFKIEKQIVPKAVARRRNWVKFGDSRSDKPGPNSQTTMASEEILMQFIGSKEFDQTHETQLDPGKNIAKCRICNGEHWSVNCPYKGTSMDSKTMMETKANAAAAAAISDPSKTGKYVPPFMKDGGGISGSKNWGRGRDRDDSSAVRISNLSESMTETDLEELVKKIGPHTKMYLAREKNSGLCKGFAYVHFKFRQDAAAAIEVLNGHGYDHLILCVEWSKPQP</sequence>
<evidence type="ECO:0000250" key="1">
    <source>
        <dbReference type="UniProtKB" id="Q9VDM6"/>
    </source>
</evidence>
<evidence type="ECO:0000255" key="2">
    <source>
        <dbReference type="HAMAP-Rule" id="MF_03006"/>
    </source>
</evidence>
<gene>
    <name evidence="1" type="primary">eIF3g2</name>
    <name evidence="2" type="synonym">eIF3-S4</name>
    <name evidence="1" type="synonym">eIF3gb</name>
    <name type="ORF">GD19352</name>
</gene>
<reference key="1">
    <citation type="journal article" date="2007" name="Nature">
        <title>Evolution of genes and genomes on the Drosophila phylogeny.</title>
        <authorList>
            <consortium name="Drosophila 12 genomes consortium"/>
        </authorList>
    </citation>
    <scope>NUCLEOTIDE SEQUENCE [LARGE SCALE GENOMIC DNA]</scope>
</reference>
<feature type="chain" id="PRO_0000365424" description="Eukaryotic translation initiation factor 3 subunit G-2">
    <location>
        <begin position="1"/>
        <end position="273"/>
    </location>
</feature>
<feature type="domain" description="RRM" evidence="2">
    <location>
        <begin position="193"/>
        <end position="271"/>
    </location>
</feature>
<proteinExistence type="inferred from homology"/>
<accession>B4QS37</accession>
<comment type="function">
    <text evidence="2">RNA-binding component of the eukaryotic translation initiation factor 3 (eIF-3) complex, which is involved in protein synthesis of a specialized repertoire of mRNAs and, together with other initiation factors, stimulates binding of mRNA and methionyl-tRNAi to the 40S ribosome. The eIF-3 complex specifically targets and initiates translation of a subset of mRNAs involved in cell proliferation. This subunit can bind 18S rRNA.</text>
</comment>
<comment type="subunit">
    <text evidence="2">Component of the eukaryotic translation initiation factor 3 (eIF-3) complex. The eIF-3 complex interacts with pix.</text>
</comment>
<comment type="subcellular location">
    <subcellularLocation>
        <location evidence="2">Cytoplasm</location>
    </subcellularLocation>
</comment>
<comment type="similarity">
    <text evidence="2">Belongs to the eIF-3 subunit G family.</text>
</comment>